<protein>
    <recommendedName>
        <fullName evidence="1">Chaperone protein TorD</fullName>
    </recommendedName>
</protein>
<feature type="chain" id="PRO_1000065500" description="Chaperone protein TorD">
    <location>
        <begin position="1"/>
        <end position="199"/>
    </location>
</feature>
<gene>
    <name evidence="1" type="primary">torD</name>
    <name type="ordered locus">EcE24377A_1116</name>
</gene>
<name>TORD_ECO24</name>
<accession>A7ZKA2</accession>
<reference key="1">
    <citation type="journal article" date="2008" name="J. Bacteriol.">
        <title>The pangenome structure of Escherichia coli: comparative genomic analysis of E. coli commensal and pathogenic isolates.</title>
        <authorList>
            <person name="Rasko D.A."/>
            <person name="Rosovitz M.J."/>
            <person name="Myers G.S.A."/>
            <person name="Mongodin E.F."/>
            <person name="Fricke W.F."/>
            <person name="Gajer P."/>
            <person name="Crabtree J."/>
            <person name="Sebaihia M."/>
            <person name="Thomson N.R."/>
            <person name="Chaudhuri R."/>
            <person name="Henderson I.R."/>
            <person name="Sperandio V."/>
            <person name="Ravel J."/>
        </authorList>
    </citation>
    <scope>NUCLEOTIDE SEQUENCE [LARGE SCALE GENOMIC DNA]</scope>
    <source>
        <strain>E24377A / ETEC</strain>
    </source>
</reference>
<evidence type="ECO:0000255" key="1">
    <source>
        <dbReference type="HAMAP-Rule" id="MF_01150"/>
    </source>
</evidence>
<organism>
    <name type="scientific">Escherichia coli O139:H28 (strain E24377A / ETEC)</name>
    <dbReference type="NCBI Taxonomy" id="331111"/>
    <lineage>
        <taxon>Bacteria</taxon>
        <taxon>Pseudomonadati</taxon>
        <taxon>Pseudomonadota</taxon>
        <taxon>Gammaproteobacteria</taxon>
        <taxon>Enterobacterales</taxon>
        <taxon>Enterobacteriaceae</taxon>
        <taxon>Escherichia</taxon>
    </lineage>
</organism>
<comment type="function">
    <text evidence="1">Involved in the biogenesis of TorA. Acts on TorA before the insertion of the molybdenum cofactor and, as a result, probably favors a conformation of the apoenzyme that is competent for acquiring the cofactor.</text>
</comment>
<comment type="subcellular location">
    <subcellularLocation>
        <location evidence="1">Cytoplasm</location>
    </subcellularLocation>
</comment>
<comment type="similarity">
    <text evidence="1">Belongs to the TorD/DmsD family. TorD subfamily.</text>
</comment>
<dbReference type="EMBL" id="CP000800">
    <property type="protein sequence ID" value="ABV17969.1"/>
    <property type="molecule type" value="Genomic_DNA"/>
</dbReference>
<dbReference type="RefSeq" id="WP_000209869.1">
    <property type="nucleotide sequence ID" value="NC_009801.1"/>
</dbReference>
<dbReference type="SMR" id="A7ZKA2"/>
<dbReference type="KEGG" id="ecw:EcE24377A_1116"/>
<dbReference type="HOGENOM" id="CLU_077650_4_0_6"/>
<dbReference type="Proteomes" id="UP000001122">
    <property type="component" value="Chromosome"/>
</dbReference>
<dbReference type="GO" id="GO:0005737">
    <property type="term" value="C:cytoplasm"/>
    <property type="evidence" value="ECO:0007669"/>
    <property type="project" value="UniProtKB-SubCell"/>
</dbReference>
<dbReference type="GO" id="GO:0051259">
    <property type="term" value="P:protein complex oligomerization"/>
    <property type="evidence" value="ECO:0007669"/>
    <property type="project" value="InterPro"/>
</dbReference>
<dbReference type="GO" id="GO:0006457">
    <property type="term" value="P:protein folding"/>
    <property type="evidence" value="ECO:0007669"/>
    <property type="project" value="UniProtKB-UniRule"/>
</dbReference>
<dbReference type="FunFam" id="1.20.120.1820:FF:000001">
    <property type="entry name" value="Chaperone protein TorD"/>
    <property type="match status" value="1"/>
</dbReference>
<dbReference type="Gene3D" id="1.20.120.1820">
    <property type="match status" value="1"/>
</dbReference>
<dbReference type="Gene3D" id="1.20.1280.20">
    <property type="entry name" value="HscB, C-terminal domain"/>
    <property type="match status" value="1"/>
</dbReference>
<dbReference type="HAMAP" id="MF_01150">
    <property type="entry name" value="TorD"/>
    <property type="match status" value="1"/>
</dbReference>
<dbReference type="InterPro" id="IPR023069">
    <property type="entry name" value="Chaperone_TorD"/>
</dbReference>
<dbReference type="InterPro" id="IPR020945">
    <property type="entry name" value="DMSO/NO3_reduct_chaperone"/>
</dbReference>
<dbReference type="InterPro" id="IPR036386">
    <property type="entry name" value="HscB_C_sf"/>
</dbReference>
<dbReference type="InterPro" id="IPR036411">
    <property type="entry name" value="TorD-like_sf"/>
</dbReference>
<dbReference type="InterPro" id="IPR050289">
    <property type="entry name" value="TorD/DmsD_chaperones"/>
</dbReference>
<dbReference type="NCBIfam" id="NF003442">
    <property type="entry name" value="PRK04976.1"/>
    <property type="match status" value="1"/>
</dbReference>
<dbReference type="PANTHER" id="PTHR34227:SF11">
    <property type="entry name" value="CHAPERONE PROTEIN TORD"/>
    <property type="match status" value="1"/>
</dbReference>
<dbReference type="PANTHER" id="PTHR34227">
    <property type="entry name" value="CHAPERONE PROTEIN YCDY"/>
    <property type="match status" value="1"/>
</dbReference>
<dbReference type="Pfam" id="PF02613">
    <property type="entry name" value="Nitrate_red_del"/>
    <property type="match status" value="1"/>
</dbReference>
<dbReference type="SUPFAM" id="SSF89155">
    <property type="entry name" value="TorD-like"/>
    <property type="match status" value="1"/>
</dbReference>
<proteinExistence type="inferred from homology"/>
<keyword id="KW-0143">Chaperone</keyword>
<keyword id="KW-0963">Cytoplasm</keyword>
<keyword id="KW-1185">Reference proteome</keyword>
<sequence>MTTLTAQQIACVYAWLAQLFSRELDDEQLTQIASAQMAEWFSLLKSEPPLAAAVNELENCIATLTVRDDARLELAADFCGLFLMTDKQAALPYASAYKQDEQEIKRLLVEAGMETSGNFNEPADHLAIYLELLSHLHFSLGEGTVPARRIDSLRQKTLTALWQWLPEFVVRCRQYDSFGFYAALSQLLLVLVESDHQNR</sequence>